<sequence>MLERIKDSFTESIQTKIDAAEALPESIAKAAEMMVQCLLGGNKILACGNGGSAGDAQHFSAELLNRYEIERPPLPAIALSTDTSTITAIANDYSYDEIFSKQILALGQPGDILLAISTSGNSGNVIKAMEAALSRDMTIVALTGKDGGAMAGLLSVGDVEIRVPSNVTARIQEVHLLVIHCLCDNIDRTLFPQDEQQ</sequence>
<keyword id="KW-0119">Carbohydrate metabolism</keyword>
<keyword id="KW-0963">Cytoplasm</keyword>
<keyword id="KW-0413">Isomerase</keyword>
<keyword id="KW-0479">Metal-binding</keyword>
<keyword id="KW-0862">Zinc</keyword>
<accession>A0L231</accession>
<organism>
    <name type="scientific">Shewanella sp. (strain ANA-3)</name>
    <dbReference type="NCBI Taxonomy" id="94122"/>
    <lineage>
        <taxon>Bacteria</taxon>
        <taxon>Pseudomonadati</taxon>
        <taxon>Pseudomonadota</taxon>
        <taxon>Gammaproteobacteria</taxon>
        <taxon>Alteromonadales</taxon>
        <taxon>Shewanellaceae</taxon>
        <taxon>Shewanella</taxon>
    </lineage>
</organism>
<reference key="1">
    <citation type="submission" date="2006-09" db="EMBL/GenBank/DDBJ databases">
        <title>Complete sequence of chromosome 1 of Shewanella sp. ANA-3.</title>
        <authorList>
            <person name="Copeland A."/>
            <person name="Lucas S."/>
            <person name="Lapidus A."/>
            <person name="Barry K."/>
            <person name="Detter J.C."/>
            <person name="Glavina del Rio T."/>
            <person name="Hammon N."/>
            <person name="Israni S."/>
            <person name="Dalin E."/>
            <person name="Tice H."/>
            <person name="Pitluck S."/>
            <person name="Chertkov O."/>
            <person name="Brettin T."/>
            <person name="Bruce D."/>
            <person name="Han C."/>
            <person name="Tapia R."/>
            <person name="Gilna P."/>
            <person name="Schmutz J."/>
            <person name="Larimer F."/>
            <person name="Land M."/>
            <person name="Hauser L."/>
            <person name="Kyrpides N."/>
            <person name="Kim E."/>
            <person name="Newman D."/>
            <person name="Salticov C."/>
            <person name="Konstantinidis K."/>
            <person name="Klappenback J."/>
            <person name="Tiedje J."/>
            <person name="Richardson P."/>
        </authorList>
    </citation>
    <scope>NUCLEOTIDE SEQUENCE [LARGE SCALE GENOMIC DNA]</scope>
    <source>
        <strain>ANA-3</strain>
    </source>
</reference>
<dbReference type="EC" id="5.3.1.28" evidence="1"/>
<dbReference type="EMBL" id="CP000469">
    <property type="protein sequence ID" value="ABK50100.1"/>
    <property type="molecule type" value="Genomic_DNA"/>
</dbReference>
<dbReference type="RefSeq" id="WP_011070670.1">
    <property type="nucleotide sequence ID" value="NC_008577.1"/>
</dbReference>
<dbReference type="SMR" id="A0L231"/>
<dbReference type="STRING" id="94122.Shewana3_3882"/>
<dbReference type="KEGG" id="shn:Shewana3_3882"/>
<dbReference type="eggNOG" id="COG0279">
    <property type="taxonomic scope" value="Bacteria"/>
</dbReference>
<dbReference type="HOGENOM" id="CLU_080999_4_0_6"/>
<dbReference type="OrthoDB" id="9810929at2"/>
<dbReference type="UniPathway" id="UPA00041">
    <property type="reaction ID" value="UER00436"/>
</dbReference>
<dbReference type="Proteomes" id="UP000002589">
    <property type="component" value="Chromosome"/>
</dbReference>
<dbReference type="GO" id="GO:0005737">
    <property type="term" value="C:cytoplasm"/>
    <property type="evidence" value="ECO:0007669"/>
    <property type="project" value="UniProtKB-SubCell"/>
</dbReference>
<dbReference type="GO" id="GO:0097367">
    <property type="term" value="F:carbohydrate derivative binding"/>
    <property type="evidence" value="ECO:0007669"/>
    <property type="project" value="InterPro"/>
</dbReference>
<dbReference type="GO" id="GO:0008968">
    <property type="term" value="F:D-sedoheptulose 7-phosphate isomerase activity"/>
    <property type="evidence" value="ECO:0007669"/>
    <property type="project" value="UniProtKB-UniRule"/>
</dbReference>
<dbReference type="GO" id="GO:0008270">
    <property type="term" value="F:zinc ion binding"/>
    <property type="evidence" value="ECO:0007669"/>
    <property type="project" value="UniProtKB-UniRule"/>
</dbReference>
<dbReference type="GO" id="GO:0005975">
    <property type="term" value="P:carbohydrate metabolic process"/>
    <property type="evidence" value="ECO:0007669"/>
    <property type="project" value="UniProtKB-UniRule"/>
</dbReference>
<dbReference type="GO" id="GO:2001061">
    <property type="term" value="P:D-glycero-D-manno-heptose 7-phosphate biosynthetic process"/>
    <property type="evidence" value="ECO:0007669"/>
    <property type="project" value="UniProtKB-UniPathway"/>
</dbReference>
<dbReference type="CDD" id="cd05006">
    <property type="entry name" value="SIS_GmhA"/>
    <property type="match status" value="1"/>
</dbReference>
<dbReference type="Gene3D" id="3.40.50.10490">
    <property type="entry name" value="Glucose-6-phosphate isomerase like protein, domain 1"/>
    <property type="match status" value="1"/>
</dbReference>
<dbReference type="HAMAP" id="MF_00067">
    <property type="entry name" value="GmhA"/>
    <property type="match status" value="1"/>
</dbReference>
<dbReference type="InterPro" id="IPR035461">
    <property type="entry name" value="GmhA/DiaA"/>
</dbReference>
<dbReference type="InterPro" id="IPR004515">
    <property type="entry name" value="Phosphoheptose_Isoase"/>
</dbReference>
<dbReference type="InterPro" id="IPR001347">
    <property type="entry name" value="SIS_dom"/>
</dbReference>
<dbReference type="InterPro" id="IPR046348">
    <property type="entry name" value="SIS_dom_sf"/>
</dbReference>
<dbReference type="InterPro" id="IPR050099">
    <property type="entry name" value="SIS_GmhA/DiaA_subfam"/>
</dbReference>
<dbReference type="NCBIfam" id="NF010546">
    <property type="entry name" value="PRK13936.1"/>
    <property type="match status" value="1"/>
</dbReference>
<dbReference type="PANTHER" id="PTHR30390:SF6">
    <property type="entry name" value="DNAA INITIATOR-ASSOCIATING PROTEIN DIAA"/>
    <property type="match status" value="1"/>
</dbReference>
<dbReference type="PANTHER" id="PTHR30390">
    <property type="entry name" value="SEDOHEPTULOSE 7-PHOSPHATE ISOMERASE / DNAA INITIATOR-ASSOCIATING FACTOR FOR REPLICATION INITIATION"/>
    <property type="match status" value="1"/>
</dbReference>
<dbReference type="Pfam" id="PF13580">
    <property type="entry name" value="SIS_2"/>
    <property type="match status" value="1"/>
</dbReference>
<dbReference type="SUPFAM" id="SSF53697">
    <property type="entry name" value="SIS domain"/>
    <property type="match status" value="1"/>
</dbReference>
<dbReference type="PROSITE" id="PS51464">
    <property type="entry name" value="SIS"/>
    <property type="match status" value="1"/>
</dbReference>
<protein>
    <recommendedName>
        <fullName evidence="1">Phosphoheptose isomerase</fullName>
        <ecNumber evidence="1">5.3.1.28</ecNumber>
    </recommendedName>
    <alternativeName>
        <fullName evidence="1">Sedoheptulose 7-phosphate isomerase</fullName>
    </alternativeName>
</protein>
<evidence type="ECO:0000255" key="1">
    <source>
        <dbReference type="HAMAP-Rule" id="MF_00067"/>
    </source>
</evidence>
<name>GMHA_SHESA</name>
<feature type="chain" id="PRO_1000197026" description="Phosphoheptose isomerase">
    <location>
        <begin position="1"/>
        <end position="197"/>
    </location>
</feature>
<feature type="domain" description="SIS" evidence="1">
    <location>
        <begin position="34"/>
        <end position="196"/>
    </location>
</feature>
<feature type="binding site" evidence="1">
    <location>
        <begin position="49"/>
        <end position="51"/>
    </location>
    <ligand>
        <name>substrate</name>
    </ligand>
</feature>
<feature type="binding site" evidence="1">
    <location>
        <position position="58"/>
    </location>
    <ligand>
        <name>Zn(2+)</name>
        <dbReference type="ChEBI" id="CHEBI:29105"/>
    </ligand>
</feature>
<feature type="binding site" evidence="1">
    <location>
        <position position="62"/>
    </location>
    <ligand>
        <name>substrate</name>
    </ligand>
</feature>
<feature type="binding site" evidence="1">
    <location>
        <position position="62"/>
    </location>
    <ligand>
        <name>Zn(2+)</name>
        <dbReference type="ChEBI" id="CHEBI:29105"/>
    </ligand>
</feature>
<feature type="binding site" evidence="1">
    <location>
        <begin position="91"/>
        <end position="92"/>
    </location>
    <ligand>
        <name>substrate</name>
    </ligand>
</feature>
<feature type="binding site" evidence="1">
    <location>
        <begin position="117"/>
        <end position="119"/>
    </location>
    <ligand>
        <name>substrate</name>
    </ligand>
</feature>
<feature type="binding site" evidence="1">
    <location>
        <position position="122"/>
    </location>
    <ligand>
        <name>substrate</name>
    </ligand>
</feature>
<feature type="binding site" evidence="1">
    <location>
        <position position="172"/>
    </location>
    <ligand>
        <name>substrate</name>
    </ligand>
</feature>
<feature type="binding site" evidence="1">
    <location>
        <position position="172"/>
    </location>
    <ligand>
        <name>Zn(2+)</name>
        <dbReference type="ChEBI" id="CHEBI:29105"/>
    </ligand>
</feature>
<feature type="binding site" evidence="1">
    <location>
        <position position="180"/>
    </location>
    <ligand>
        <name>Zn(2+)</name>
        <dbReference type="ChEBI" id="CHEBI:29105"/>
    </ligand>
</feature>
<gene>
    <name evidence="1" type="primary">gmhA</name>
    <name type="ordered locus">Shewana3_3882</name>
</gene>
<proteinExistence type="inferred from homology"/>
<comment type="function">
    <text evidence="1">Catalyzes the isomerization of sedoheptulose 7-phosphate in D-glycero-D-manno-heptose 7-phosphate.</text>
</comment>
<comment type="catalytic activity">
    <reaction evidence="1">
        <text>2 D-sedoheptulose 7-phosphate = D-glycero-alpha-D-manno-heptose 7-phosphate + D-glycero-beta-D-manno-heptose 7-phosphate</text>
        <dbReference type="Rhea" id="RHEA:27489"/>
        <dbReference type="ChEBI" id="CHEBI:57483"/>
        <dbReference type="ChEBI" id="CHEBI:60203"/>
        <dbReference type="ChEBI" id="CHEBI:60204"/>
        <dbReference type="EC" id="5.3.1.28"/>
    </reaction>
</comment>
<comment type="cofactor">
    <cofactor evidence="1">
        <name>Zn(2+)</name>
        <dbReference type="ChEBI" id="CHEBI:29105"/>
    </cofactor>
    <text evidence="1">Binds 1 zinc ion per subunit.</text>
</comment>
<comment type="pathway">
    <text evidence="1">Carbohydrate biosynthesis; D-glycero-D-manno-heptose 7-phosphate biosynthesis; D-glycero-alpha-D-manno-heptose 7-phosphate and D-glycero-beta-D-manno-heptose 7-phosphate from sedoheptulose 7-phosphate: step 1/1.</text>
</comment>
<comment type="subunit">
    <text evidence="1">Homotetramer.</text>
</comment>
<comment type="subcellular location">
    <subcellularLocation>
        <location evidence="1">Cytoplasm</location>
    </subcellularLocation>
</comment>
<comment type="miscellaneous">
    <text evidence="1">The reaction produces a racemic mixture of D-glycero-alpha-D-manno-heptose 7-phosphate and D-glycero-beta-D-manno-heptose 7-phosphate.</text>
</comment>
<comment type="similarity">
    <text evidence="1">Belongs to the SIS family. GmhA subfamily.</text>
</comment>